<dbReference type="EC" id="3.1.1.59"/>
<dbReference type="EMBL" id="J04955">
    <property type="protein sequence ID" value="AAB88629.1"/>
    <property type="molecule type" value="mRNA"/>
</dbReference>
<dbReference type="PIR" id="A34325">
    <property type="entry name" value="A34325"/>
</dbReference>
<dbReference type="SMR" id="P12992"/>
<dbReference type="ESTHER" id="helvi-jhest">
    <property type="family name" value="Juvenile_hormone_esterase"/>
</dbReference>
<dbReference type="BRENDA" id="3.1.1.59">
    <property type="organism ID" value="2613"/>
</dbReference>
<dbReference type="GO" id="GO:0004453">
    <property type="term" value="F:juvenile-hormone esterase activity"/>
    <property type="evidence" value="ECO:0007669"/>
    <property type="project" value="UniProtKB-EC"/>
</dbReference>
<dbReference type="CDD" id="cd00312">
    <property type="entry name" value="Esterase_lipase"/>
    <property type="match status" value="1"/>
</dbReference>
<dbReference type="Gene3D" id="3.40.50.1820">
    <property type="entry name" value="alpha/beta hydrolase"/>
    <property type="match status" value="1"/>
</dbReference>
<dbReference type="InterPro" id="IPR029058">
    <property type="entry name" value="AB_hydrolase_fold"/>
</dbReference>
<dbReference type="InterPro" id="IPR002018">
    <property type="entry name" value="CarbesteraseB"/>
</dbReference>
<dbReference type="InterPro" id="IPR019826">
    <property type="entry name" value="Carboxylesterase_B_AS"/>
</dbReference>
<dbReference type="PANTHER" id="PTHR43142">
    <property type="entry name" value="CARBOXYLIC ESTER HYDROLASE"/>
    <property type="match status" value="1"/>
</dbReference>
<dbReference type="PANTHER" id="PTHR43142:SF1">
    <property type="entry name" value="CARBOXYLIC ESTER HYDROLASE"/>
    <property type="match status" value="1"/>
</dbReference>
<dbReference type="Pfam" id="PF00135">
    <property type="entry name" value="COesterase"/>
    <property type="match status" value="1"/>
</dbReference>
<dbReference type="SUPFAM" id="SSF53474">
    <property type="entry name" value="alpha/beta-Hydrolases"/>
    <property type="match status" value="1"/>
</dbReference>
<dbReference type="PROSITE" id="PS00122">
    <property type="entry name" value="CARBOXYLESTERASE_B_1"/>
    <property type="match status" value="1"/>
</dbReference>
<protein>
    <recommendedName>
        <fullName>Juvenile hormone esterase</fullName>
        <shortName>JH esterase</shortName>
        <ecNumber>3.1.1.59</ecNumber>
    </recommendedName>
</protein>
<proteinExistence type="evidence at protein level"/>
<name>ESTJ_HELVI</name>
<keyword id="KW-0903">Direct protein sequencing</keyword>
<keyword id="KW-1015">Disulfide bond</keyword>
<keyword id="KW-0325">Glycoprotein</keyword>
<keyword id="KW-0378">Hydrolase</keyword>
<keyword id="KW-0719">Serine esterase</keyword>
<keyword id="KW-0732">Signal</keyword>
<sequence>MTSHVLALAFLLHACTALAWQETNSRSVVAHLDSGIIRGVPRSADGIKFASFLGVPYAKQPVGELRFKELEPLEPWDNILNATNEGPICFQTDVLYGRLMAASEMSEACIYANIHVPWQSLPRVRGTTPLRPILVFIHGGGFAFGSGHEDLHGPEYLVTKNVIVITFNYRLNVFGFLSMNTTKIPGNAGLRDQVTLLRWVQRNAKNFGGDPSDITIAGQSAGASAAHLLTLSKATEGLFKRAILMSGTGMSYFFTTSPLFAAYISKQLLQILGINETDPEEIHRQLIDLPAEKLNEANAVLIEQIGLTTFLPIVESPLPGVTTIIDDDPEILIAEGRGKNVPLLIGFTSSECETFRNRLLNFDLVKKIQDNPTIIIPPKLLFMTPPELLMELAKTIERKYYNGTISIDNFVKSCSDGFYEYPALKLAQKRAETGGAPLYLYRFAYEGQNSIIKKVMGLNHEGVGHIEDLTYVFKVNSMSEALHASPSENDVKMKNLMTGYFLNFIKCSQPTCEDNNSLEVWPANNGMQYEDIVSPTIIRSKEFASRQQDIIEFFDSFTSRSPLE</sequence>
<evidence type="ECO:0000250" key="1"/>
<evidence type="ECO:0000250" key="2">
    <source>
        <dbReference type="UniProtKB" id="P19985"/>
    </source>
</evidence>
<evidence type="ECO:0000255" key="3"/>
<evidence type="ECO:0000255" key="4">
    <source>
        <dbReference type="PROSITE-ProRule" id="PRU10039"/>
    </source>
</evidence>
<evidence type="ECO:0000269" key="5">
    <source>
    </source>
</evidence>
<evidence type="ECO:0000305" key="6"/>
<comment type="function">
    <text evidence="2">JH esterase plays a crucial role in the decrease of JH activity in lepidopteran insects, by hydrolyzing the methyl ester of JH. It is also involved in the transport of JH.</text>
</comment>
<comment type="catalytic activity">
    <reaction evidence="2">
        <text>juvenile hormone I + H2O = juvenile hormone I carboxylate + methanol + H(+)</text>
        <dbReference type="Rhea" id="RHEA:46916"/>
        <dbReference type="ChEBI" id="CHEBI:15377"/>
        <dbReference type="ChEBI" id="CHEBI:15378"/>
        <dbReference type="ChEBI" id="CHEBI:17790"/>
        <dbReference type="ChEBI" id="CHEBI:83641"/>
        <dbReference type="ChEBI" id="CHEBI:87109"/>
        <dbReference type="EC" id="3.1.1.59"/>
    </reaction>
</comment>
<comment type="catalytic activity">
    <reaction evidence="2">
        <text>juvenile hormone III + H2O = juvenile hormone III carboxylate + methanol + H(+)</text>
        <dbReference type="Rhea" id="RHEA:46912"/>
        <dbReference type="ChEBI" id="CHEBI:15377"/>
        <dbReference type="ChEBI" id="CHEBI:15378"/>
        <dbReference type="ChEBI" id="CHEBI:17790"/>
        <dbReference type="ChEBI" id="CHEBI:27493"/>
        <dbReference type="ChEBI" id="CHEBI:83274"/>
        <dbReference type="EC" id="3.1.1.59"/>
    </reaction>
</comment>
<comment type="similarity">
    <text evidence="6">Belongs to the type-B carboxylesterase/lipase family.</text>
</comment>
<accession>P12992</accession>
<organism>
    <name type="scientific">Heliothis virescens</name>
    <name type="common">Tobacco budworm moth</name>
    <dbReference type="NCBI Taxonomy" id="7102"/>
    <lineage>
        <taxon>Eukaryota</taxon>
        <taxon>Metazoa</taxon>
        <taxon>Ecdysozoa</taxon>
        <taxon>Arthropoda</taxon>
        <taxon>Hexapoda</taxon>
        <taxon>Insecta</taxon>
        <taxon>Pterygota</taxon>
        <taxon>Neoptera</taxon>
        <taxon>Endopterygota</taxon>
        <taxon>Lepidoptera</taxon>
        <taxon>Glossata</taxon>
        <taxon>Ditrysia</taxon>
        <taxon>Noctuoidea</taxon>
        <taxon>Noctuidae</taxon>
        <taxon>Heliothinae</taxon>
        <taxon>Heliothis</taxon>
    </lineage>
</organism>
<reference key="1">
    <citation type="journal article" date="1989" name="J. Biol. Chem.">
        <title>Isolation and sequencing of cDNA clones coding for juvenile hormone esterase from Heliothis virescens. Evidence for a catalytic mechanism for the serine carboxylesterases different from that of the serine proteases.</title>
        <authorList>
            <person name="Hanzlik T.N."/>
            <person name="Yehia A.I.A.-A."/>
            <person name="Harshman L.G."/>
            <person name="Hammock B.D."/>
        </authorList>
    </citation>
    <scope>NUCLEOTIDE SEQUENCE [MRNA]</scope>
    <scope>PROTEIN SEQUENCE OF 20-54</scope>
</reference>
<reference key="2">
    <citation type="submission" date="1997-12" db="EMBL/GenBank/DDBJ databases">
        <authorList>
            <person name="Hanzlik T.N."/>
        </authorList>
    </citation>
    <scope>SEQUENCE REVISION</scope>
</reference>
<feature type="signal peptide" evidence="5">
    <location>
        <begin position="1"/>
        <end position="19"/>
    </location>
</feature>
<feature type="chain" id="PRO_0000008629" description="Juvenile hormone esterase">
    <location>
        <begin position="20"/>
        <end position="564"/>
    </location>
</feature>
<feature type="active site" description="Acyl-ester intermediate" evidence="4">
    <location>
        <position position="220"/>
    </location>
</feature>
<feature type="active site" description="Charge relay system" evidence="1">
    <location>
        <position position="351"/>
    </location>
</feature>
<feature type="active site" description="Charge relay system" evidence="1">
    <location>
        <position position="465"/>
    </location>
</feature>
<feature type="glycosylation site" description="N-linked (GlcNAc...) asparagine" evidence="3">
    <location>
        <position position="81"/>
    </location>
</feature>
<feature type="glycosylation site" description="N-linked (GlcNAc...) asparagine" evidence="3">
    <location>
        <position position="180"/>
    </location>
</feature>
<feature type="glycosylation site" description="N-linked (GlcNAc...) asparagine" evidence="3">
    <location>
        <position position="402"/>
    </location>
</feature>
<feature type="glycosylation site" description="N-linked (GlcNAc...) asparagine" evidence="3">
    <location>
        <position position="515"/>
    </location>
</feature>
<feature type="disulfide bond" evidence="1">
    <location>
        <begin position="89"/>
        <end position="109"/>
    </location>
</feature>
<feature type="sequence variant">
    <original>V</original>
    <variation>L</variation>
    <location>
        <position position="29"/>
    </location>
</feature>
<feature type="sequence variant">
    <original>F</original>
    <variation>P</variation>
    <location>
        <position position="52"/>
    </location>
</feature>